<name>TX31A_SELPU</name>
<feature type="signal peptide" evidence="3">
    <location>
        <begin position="1"/>
        <end position="19"/>
    </location>
</feature>
<feature type="propeptide" id="PRO_0000424394" evidence="4">
    <location>
        <begin position="20"/>
        <end position="44"/>
    </location>
</feature>
<feature type="chain" id="PRO_0000424395" description="Orally active insecticidal peptide" evidence="7">
    <location>
        <begin position="45"/>
        <end position="77"/>
    </location>
</feature>
<feature type="modified residue" description="Alanine amide" evidence="1">
    <location>
        <position position="77"/>
    </location>
</feature>
<feature type="disulfide bond" evidence="2">
    <location>
        <begin position="46"/>
        <end position="61"/>
    </location>
</feature>
<feature type="disulfide bond" evidence="2">
    <location>
        <begin position="53"/>
        <end position="66"/>
    </location>
</feature>
<feature type="disulfide bond" evidence="2">
    <location>
        <begin position="60"/>
        <end position="73"/>
    </location>
</feature>
<accession>P0DM66</accession>
<sequence>MRVLFIIAGLALLSVVCYTSEMKERSSFNEVLSEFFAADEPQERDCLGQWASCEPKNSKCCPNYACTWKYPWCRYRAGK</sequence>
<keyword id="KW-0027">Amidation</keyword>
<keyword id="KW-0903">Direct protein sequencing</keyword>
<keyword id="KW-1015">Disulfide bond</keyword>
<keyword id="KW-0872">Ion channel impairing toxin</keyword>
<keyword id="KW-0960">Knottin</keyword>
<keyword id="KW-0964">Secreted</keyword>
<keyword id="KW-0732">Signal</keyword>
<keyword id="KW-0800">Toxin</keyword>
<dbReference type="SMR" id="P0DM66"/>
<dbReference type="GO" id="GO:0005576">
    <property type="term" value="C:extracellular region"/>
    <property type="evidence" value="ECO:0007669"/>
    <property type="project" value="UniProtKB-SubCell"/>
</dbReference>
<dbReference type="GO" id="GO:0008200">
    <property type="term" value="F:ion channel inhibitor activity"/>
    <property type="evidence" value="ECO:0007669"/>
    <property type="project" value="InterPro"/>
</dbReference>
<dbReference type="GO" id="GO:0090729">
    <property type="term" value="F:toxin activity"/>
    <property type="evidence" value="ECO:0007669"/>
    <property type="project" value="UniProtKB-KW"/>
</dbReference>
<dbReference type="InterPro" id="IPR004214">
    <property type="entry name" value="Conotoxin"/>
</dbReference>
<dbReference type="Pfam" id="PF02950">
    <property type="entry name" value="Conotoxin"/>
    <property type="match status" value="1"/>
</dbReference>
<dbReference type="SUPFAM" id="SSF57059">
    <property type="entry name" value="omega toxin-like"/>
    <property type="match status" value="1"/>
</dbReference>
<proteinExistence type="evidence at protein level"/>
<comment type="function">
    <text evidence="4">Probable ion channel inhibitor. Shows insecticidal activity when injected into mealworms.</text>
</comment>
<comment type="subcellular location">
    <subcellularLocation>
        <location evidence="4">Secreted</location>
    </subcellularLocation>
</comment>
<comment type="tissue specificity">
    <text evidence="7">Expressed by the venom gland.</text>
</comment>
<comment type="domain">
    <text evidence="6">The presence of a 'disulfide through disulfide knot' structurally defines this protein as a knottin.</text>
</comment>
<comment type="similarity">
    <text evidence="6">Belongs to the neurotoxin 03 (Tx2) family. 01 subfamily.</text>
</comment>
<evidence type="ECO:0000250" key="1"/>
<evidence type="ECO:0000250" key="2">
    <source>
        <dbReference type="UniProtKB" id="P84507"/>
    </source>
</evidence>
<evidence type="ECO:0000255" key="3"/>
<evidence type="ECO:0000269" key="4">
    <source>
    </source>
</evidence>
<evidence type="ECO:0000303" key="5">
    <source>
    </source>
</evidence>
<evidence type="ECO:0000305" key="6"/>
<evidence type="ECO:0000305" key="7">
    <source>
    </source>
</evidence>
<reference key="1">
    <citation type="journal article" date="2013" name="PLoS ONE">
        <title>SVM-based prediction of propeptide cleavage sites in spider toxins identifies toxin innovation in an australian tarantula.</title>
        <authorList>
            <person name="Wong E.S."/>
            <person name="Hardy M.C."/>
            <person name="Wood D."/>
            <person name="Bailey T."/>
            <person name="King G.F."/>
        </authorList>
    </citation>
    <scope>NUCLEOTIDE SEQUENCE [MRNA]</scope>
    <scope>PARTIAL PROTEIN SEQUENCE</scope>
    <scope>FUNCTION</scope>
    <scope>SUBCELLULAR LOCATION</scope>
    <source>
        <tissue>Venom</tissue>
        <tissue>Venom gland</tissue>
    </source>
</reference>
<protein>
    <recommendedName>
        <fullName evidence="5">Orally active insecticidal peptide</fullName>
        <shortName evidence="5">Toxin OAIP 2</shortName>
    </recommendedName>
</protein>
<organism>
    <name type="scientific">Selenotypus plumipes</name>
    <name type="common">Australian featherleg tarantula</name>
    <dbReference type="NCBI Taxonomy" id="1395661"/>
    <lineage>
        <taxon>Eukaryota</taxon>
        <taxon>Metazoa</taxon>
        <taxon>Ecdysozoa</taxon>
        <taxon>Arthropoda</taxon>
        <taxon>Chelicerata</taxon>
        <taxon>Arachnida</taxon>
        <taxon>Araneae</taxon>
        <taxon>Mygalomorphae</taxon>
        <taxon>Theraphosidae</taxon>
        <taxon>Selenotypus</taxon>
    </lineage>
</organism>